<name>MBO2_SCHPO</name>
<reference key="1">
    <citation type="journal article" date="2002" name="Nature">
        <title>The genome sequence of Schizosaccharomyces pombe.</title>
        <authorList>
            <person name="Wood V."/>
            <person name="Gwilliam R."/>
            <person name="Rajandream M.A."/>
            <person name="Lyne M.H."/>
            <person name="Lyne R."/>
            <person name="Stewart A."/>
            <person name="Sgouros J.G."/>
            <person name="Peat N."/>
            <person name="Hayles J."/>
            <person name="Baker S.G."/>
            <person name="Basham D."/>
            <person name="Bowman S."/>
            <person name="Brooks K."/>
            <person name="Brown D."/>
            <person name="Brown S."/>
            <person name="Chillingworth T."/>
            <person name="Churcher C.M."/>
            <person name="Collins M."/>
            <person name="Connor R."/>
            <person name="Cronin A."/>
            <person name="Davis P."/>
            <person name="Feltwell T."/>
            <person name="Fraser A."/>
            <person name="Gentles S."/>
            <person name="Goble A."/>
            <person name="Hamlin N."/>
            <person name="Harris D.E."/>
            <person name="Hidalgo J."/>
            <person name="Hodgson G."/>
            <person name="Holroyd S."/>
            <person name="Hornsby T."/>
            <person name="Howarth S."/>
            <person name="Huckle E.J."/>
            <person name="Hunt S."/>
            <person name="Jagels K."/>
            <person name="James K.D."/>
            <person name="Jones L."/>
            <person name="Jones M."/>
            <person name="Leather S."/>
            <person name="McDonald S."/>
            <person name="McLean J."/>
            <person name="Mooney P."/>
            <person name="Moule S."/>
            <person name="Mungall K.L."/>
            <person name="Murphy L.D."/>
            <person name="Niblett D."/>
            <person name="Odell C."/>
            <person name="Oliver K."/>
            <person name="O'Neil S."/>
            <person name="Pearson D."/>
            <person name="Quail M.A."/>
            <person name="Rabbinowitsch E."/>
            <person name="Rutherford K.M."/>
            <person name="Rutter S."/>
            <person name="Saunders D."/>
            <person name="Seeger K."/>
            <person name="Sharp S."/>
            <person name="Skelton J."/>
            <person name="Simmonds M.N."/>
            <person name="Squares R."/>
            <person name="Squares S."/>
            <person name="Stevens K."/>
            <person name="Taylor K."/>
            <person name="Taylor R.G."/>
            <person name="Tivey A."/>
            <person name="Walsh S.V."/>
            <person name="Warren T."/>
            <person name="Whitehead S."/>
            <person name="Woodward J.R."/>
            <person name="Volckaert G."/>
            <person name="Aert R."/>
            <person name="Robben J."/>
            <person name="Grymonprez B."/>
            <person name="Weltjens I."/>
            <person name="Vanstreels E."/>
            <person name="Rieger M."/>
            <person name="Schaefer M."/>
            <person name="Mueller-Auer S."/>
            <person name="Gabel C."/>
            <person name="Fuchs M."/>
            <person name="Duesterhoeft A."/>
            <person name="Fritzc C."/>
            <person name="Holzer E."/>
            <person name="Moestl D."/>
            <person name="Hilbert H."/>
            <person name="Borzym K."/>
            <person name="Langer I."/>
            <person name="Beck A."/>
            <person name="Lehrach H."/>
            <person name="Reinhardt R."/>
            <person name="Pohl T.M."/>
            <person name="Eger P."/>
            <person name="Zimmermann W."/>
            <person name="Wedler H."/>
            <person name="Wambutt R."/>
            <person name="Purnelle B."/>
            <person name="Goffeau A."/>
            <person name="Cadieu E."/>
            <person name="Dreano S."/>
            <person name="Gloux S."/>
            <person name="Lelaure V."/>
            <person name="Mottier S."/>
            <person name="Galibert F."/>
            <person name="Aves S.J."/>
            <person name="Xiang Z."/>
            <person name="Hunt C."/>
            <person name="Moore K."/>
            <person name="Hurst S.M."/>
            <person name="Lucas M."/>
            <person name="Rochet M."/>
            <person name="Gaillardin C."/>
            <person name="Tallada V.A."/>
            <person name="Garzon A."/>
            <person name="Thode G."/>
            <person name="Daga R.R."/>
            <person name="Cruzado L."/>
            <person name="Jimenez J."/>
            <person name="Sanchez M."/>
            <person name="del Rey F."/>
            <person name="Benito J."/>
            <person name="Dominguez A."/>
            <person name="Revuelta J.L."/>
            <person name="Moreno S."/>
            <person name="Armstrong J."/>
            <person name="Forsburg S.L."/>
            <person name="Cerutti L."/>
            <person name="Lowe T."/>
            <person name="McCombie W.R."/>
            <person name="Paulsen I."/>
            <person name="Potashkin J."/>
            <person name="Shpakovski G.V."/>
            <person name="Ussery D."/>
            <person name="Barrell B.G."/>
            <person name="Nurse P."/>
        </authorList>
    </citation>
    <scope>NUCLEOTIDE SEQUENCE [LARGE SCALE GENOMIC DNA]</scope>
    <source>
        <strain>972 / ATCC 24843</strain>
    </source>
</reference>
<reference key="2">
    <citation type="journal article" date="2000" name="Genes Cells">
        <title>Large-scale screening of intracellular protein localization in living fission yeast cells by the use of a GFP-fusion genomic DNA library.</title>
        <authorList>
            <person name="Ding D.-Q."/>
            <person name="Tomita Y."/>
            <person name="Yamamoto A."/>
            <person name="Chikashige Y."/>
            <person name="Haraguchi T."/>
            <person name="Hiraoka Y."/>
        </authorList>
    </citation>
    <scope>NUCLEOTIDE SEQUENCE [LARGE SCALE GENOMIC DNA] OF 191-348</scope>
    <scope>SUBCELLULAR LOCATION</scope>
    <source>
        <strain>ATCC 38364 / 968</strain>
    </source>
</reference>
<reference key="3">
    <citation type="journal article" date="2005" name="Mol. Biol. Cell">
        <title>Fission yeast mto2p regulates microtubule nucleation by the centrosomin-related protein mto1p.</title>
        <authorList>
            <person name="Samejima I."/>
            <person name="Lourenco P.C."/>
            <person name="Snaith H.A."/>
            <person name="Sawin K.E."/>
        </authorList>
    </citation>
    <scope>FUNCTION</scope>
    <scope>INTERACTION WITH MTO1</scope>
    <scope>SUBCELLULAR LOCATION</scope>
    <scope>DISRUPTION PHENOTYPE</scope>
</reference>
<reference key="4">
    <citation type="journal article" date="2005" name="Mol. Biol. Cell">
        <title>Mto2p, a novel fission yeast protein required for cytoplasmic microtubule organization and anchoring of the cytokinetic actin ring.</title>
        <authorList>
            <person name="Venkatram S."/>
            <person name="Jennings J.L."/>
            <person name="Link A."/>
            <person name="Gould K.L."/>
        </authorList>
    </citation>
    <scope>FUNCTION</scope>
    <scope>INTERACTION WITH MTO1</scope>
    <scope>IDENTIFICATION BY MASS SPECTROMETRY</scope>
    <scope>SUBCELLULAR LOCATION</scope>
    <scope>DISRUPTION PHENOTYPE</scope>
</reference>
<reference key="5">
    <citation type="journal article" date="2008" name="J. Cell Sci.">
        <title>Two distinct regions of Mto1 are required for normal microtubule nucleation and efficient association with the gamma-tubulin complex in vivo.</title>
        <authorList>
            <person name="Samejima I."/>
            <person name="Miller V.J."/>
            <person name="Groocock L.M."/>
            <person name="Sawin K.E."/>
        </authorList>
    </citation>
    <scope>FUNCTION</scope>
    <scope>INTERACTION WITH MTO1; ALP4; ALP6 AND GTB1</scope>
    <scope>DISRUPTION PHENOTYPE</scope>
</reference>
<reference key="6">
    <citation type="journal article" date="2008" name="J. Proteome Res.">
        <title>Phosphoproteome analysis of fission yeast.</title>
        <authorList>
            <person name="Wilson-Grady J.T."/>
            <person name="Villen J."/>
            <person name="Gygi S.P."/>
        </authorList>
    </citation>
    <scope>PHOSPHORYLATION [LARGE SCALE ANALYSIS] AT SER-366 AND SER-396</scope>
    <scope>IDENTIFICATION BY MASS SPECTROMETRY</scope>
</reference>
<evidence type="ECO:0000256" key="1">
    <source>
        <dbReference type="SAM" id="MobiDB-lite"/>
    </source>
</evidence>
<evidence type="ECO:0000269" key="2">
    <source>
    </source>
</evidence>
<evidence type="ECO:0000269" key="3">
    <source>
    </source>
</evidence>
<evidence type="ECO:0000269" key="4">
    <source>
    </source>
</evidence>
<evidence type="ECO:0000269" key="5">
    <source>
    </source>
</evidence>
<evidence type="ECO:0000269" key="6">
    <source>
    </source>
</evidence>
<evidence type="ECO:0000305" key="7"/>
<evidence type="ECO:0000312" key="8">
    <source>
        <dbReference type="PomBase" id="SPBC902.06"/>
    </source>
</evidence>
<evidence type="ECO:0007829" key="9">
    <source>
        <dbReference type="PDB" id="6GDJ"/>
    </source>
</evidence>
<feature type="chain" id="PRO_0000116779" description="Gamma tubulin complex adapter mto2">
    <location>
        <begin position="1"/>
        <end position="397"/>
    </location>
</feature>
<feature type="region of interest" description="Disordered" evidence="1">
    <location>
        <begin position="1"/>
        <end position="44"/>
    </location>
</feature>
<feature type="region of interest" description="Disordered" evidence="1">
    <location>
        <begin position="269"/>
        <end position="298"/>
    </location>
</feature>
<feature type="region of interest" description="Disordered" evidence="1">
    <location>
        <begin position="346"/>
        <end position="397"/>
    </location>
</feature>
<feature type="compositionally biased region" description="Basic and acidic residues" evidence="1">
    <location>
        <begin position="1"/>
        <end position="13"/>
    </location>
</feature>
<feature type="compositionally biased region" description="Polar residues" evidence="1">
    <location>
        <begin position="22"/>
        <end position="37"/>
    </location>
</feature>
<feature type="compositionally biased region" description="Polar residues" evidence="1">
    <location>
        <begin position="269"/>
        <end position="281"/>
    </location>
</feature>
<feature type="compositionally biased region" description="Polar residues" evidence="1">
    <location>
        <begin position="352"/>
        <end position="369"/>
    </location>
</feature>
<feature type="compositionally biased region" description="Polar residues" evidence="1">
    <location>
        <begin position="382"/>
        <end position="397"/>
    </location>
</feature>
<feature type="modified residue" description="Phosphoserine" evidence="5">
    <location>
        <position position="366"/>
    </location>
</feature>
<feature type="modified residue" description="Phosphoserine" evidence="5">
    <location>
        <position position="396"/>
    </location>
</feature>
<feature type="helix" evidence="9">
    <location>
        <begin position="182"/>
        <end position="194"/>
    </location>
</feature>
<feature type="helix" evidence="9">
    <location>
        <begin position="200"/>
        <end position="219"/>
    </location>
</feature>
<feature type="helix" evidence="9">
    <location>
        <begin position="223"/>
        <end position="249"/>
    </location>
</feature>
<protein>
    <recommendedName>
        <fullName evidence="7">Gamma tubulin complex adapter mto2</fullName>
    </recommendedName>
    <alternativeName>
        <fullName evidence="7">Microtubule organizer protein 2</fullName>
    </alternativeName>
</protein>
<gene>
    <name evidence="8" type="primary">mto2</name>
    <name type="ORF">SPBC902.06</name>
</gene>
<keyword id="KW-0002">3D-structure</keyword>
<keyword id="KW-0963">Cytoplasm</keyword>
<keyword id="KW-0206">Cytoskeleton</keyword>
<keyword id="KW-0597">Phosphoprotein</keyword>
<keyword id="KW-1185">Reference proteome</keyword>
<proteinExistence type="evidence at protein level"/>
<organism>
    <name type="scientific">Schizosaccharomyces pombe (strain 972 / ATCC 24843)</name>
    <name type="common">Fission yeast</name>
    <dbReference type="NCBI Taxonomy" id="284812"/>
    <lineage>
        <taxon>Eukaryota</taxon>
        <taxon>Fungi</taxon>
        <taxon>Dikarya</taxon>
        <taxon>Ascomycota</taxon>
        <taxon>Taphrinomycotina</taxon>
        <taxon>Schizosaccharomycetes</taxon>
        <taxon>Schizosaccharomycetales</taxon>
        <taxon>Schizosaccharomycetaceae</taxon>
        <taxon>Schizosaccharomyces</taxon>
    </lineage>
</organism>
<sequence>MSEHNYQSDREVAEDPFLNYEASANQLSSNSRESTPRGSPWRAGMRSASLMTEPLEDSMYSDNNYLDNGVSFTKDENPLYSPSWPSLADANVNSMKSNNAIQEHKAAKFVSEKSLEKVSTADNNLVLQELENLRERLNQVELQLSERPSSYLGYHNNLSPYRSPNSYPSLLPSTHSPHSPAPLSTMQTALMRLRTYHPSPIILKPVEQAVNHAITLVNTSPSSVVDALCRSLAELCLGLVQEAIDASILSQQESSNSLDLVRHTPPLNYTSSVDSSPQRMASDSYGRPSLHLNDPFPSVDLQSNELSHHNVRTTLFSDDSRFHSKIHTHSTPPSQMYSAASHFRYRSDPSTRHVSNSTNKSSLHPSPTSLRVAHPIIPQRASPASQSFPSLQDTPSP</sequence>
<accession>Q9USP7</accession>
<accession>Q9UTV6</accession>
<comment type="function">
    <text evidence="3 4 6">Acts together with mto1 to promote nucleation of at least a subset of cytoplasmic microtubules, by recruiting the gamma-tubulin complex to the interphase microtubule organizing center (iMTOC) and to the equatorial MTOC (eMTOC) during anaphase (PubMed:15659644, PubMed:15800064, PubMed:19001497). Does not appear to be required for cytoplasmic astral microtubule nucleation from the spindle pole body (SPB) (PubMed:15659644, PubMed:15800064). Required to establish the eMTOC, and thereby to tether the cytokinetic actin ring (PubMed:15800064).</text>
</comment>
<comment type="subunit">
    <text evidence="3 4 6">Interacts with mto1; the interaction is direct and required for efficient binding to the gamma-tubulin complex (PubMed:15659644, PubMed:15800064, PubMed:19001497). Interacts with gamma tubulin complex subunits alp4, alp6 and gtb1 (PubMed:19001497).</text>
</comment>
<comment type="interaction">
    <interactant intactId="EBI-1562556">
        <id>Q9USP7</id>
    </interactant>
    <interactant intactId="EBI-1562568">
        <id>O13670</id>
        <label>mto1</label>
    </interactant>
    <organismsDiffer>false</organismsDiffer>
    <experiments>11</experiments>
</comment>
<comment type="subcellular location">
    <subcellularLocation>
        <location evidence="2">Cytoplasm</location>
    </subcellularLocation>
    <subcellularLocation>
        <location evidence="3 4">Cytoplasm</location>
        <location evidence="3 4">Cytoskeleton</location>
        <location evidence="3 4">Microtubule organizing center</location>
    </subcellularLocation>
    <subcellularLocation>
        <location evidence="3 4">Cytoplasm</location>
        <location evidence="3 4">Cytoskeleton</location>
        <location evidence="3 4">Microtubule organizing center</location>
        <location evidence="3 4">Spindle pole body</location>
    </subcellularLocation>
    <text evidence="4">Localizes at the interphase MTOC (iMTOC) and at the equatorial MTOC (eMTOC) at the end of mitosis.</text>
</comment>
<comment type="disruption phenotype">
    <text evidence="3 4 6">Abolishes cytoplasmic microtubule nucleation from non-SPB (spindle pole body) sites, but does not appear to affect the formation of astral microtubules (PubMed:15659644, PubMed:15800064, PubMed:19001497). Fewer and thicker microtubule bundles, with microtubules curving around the cell tip (PubMed:15659644, PubMed:15800064). Cytokinetic actin ring displaced from medial region (PubMed:15800064). Curved cell shape (PubMed:15659644, PubMed:15800064).</text>
</comment>
<dbReference type="EMBL" id="CU329671">
    <property type="protein sequence ID" value="CAB62100.1"/>
    <property type="molecule type" value="Genomic_DNA"/>
</dbReference>
<dbReference type="EMBL" id="AB027971">
    <property type="protein sequence ID" value="BAA87275.1"/>
    <property type="molecule type" value="Genomic_DNA"/>
</dbReference>
<dbReference type="PIR" id="T50387">
    <property type="entry name" value="T50387"/>
</dbReference>
<dbReference type="RefSeq" id="NP_595204.1">
    <property type="nucleotide sequence ID" value="NM_001021110.2"/>
</dbReference>
<dbReference type="PDB" id="6GDJ">
    <property type="method" value="X-ray"/>
    <property type="resolution" value="1.50 A"/>
    <property type="chains" value="A/B=180-265"/>
</dbReference>
<dbReference type="PDBsum" id="6GDJ"/>
<dbReference type="SMR" id="Q9USP7"/>
<dbReference type="BioGRID" id="277778">
    <property type="interactions" value="27"/>
</dbReference>
<dbReference type="FunCoup" id="Q9USP7">
    <property type="interactions" value="5"/>
</dbReference>
<dbReference type="IntAct" id="Q9USP7">
    <property type="interactions" value="3"/>
</dbReference>
<dbReference type="STRING" id="284812.Q9USP7"/>
<dbReference type="iPTMnet" id="Q9USP7"/>
<dbReference type="PaxDb" id="4896-SPBC902.06.1"/>
<dbReference type="EnsemblFungi" id="SPBC902.06.1">
    <property type="protein sequence ID" value="SPBC902.06.1:pep"/>
    <property type="gene ID" value="SPBC902.06"/>
</dbReference>
<dbReference type="PomBase" id="SPBC902.06">
    <property type="gene designation" value="mto2"/>
</dbReference>
<dbReference type="VEuPathDB" id="FungiDB:SPBC902.06"/>
<dbReference type="HOGENOM" id="CLU_696687_0_0_1"/>
<dbReference type="InParanoid" id="Q9USP7"/>
<dbReference type="OMA" id="PLEDSMY"/>
<dbReference type="PRO" id="PR:Q9USP7"/>
<dbReference type="Proteomes" id="UP000002485">
    <property type="component" value="Chromosome II"/>
</dbReference>
<dbReference type="GO" id="GO:0032153">
    <property type="term" value="C:cell division site"/>
    <property type="evidence" value="ECO:0007005"/>
    <property type="project" value="PomBase"/>
</dbReference>
<dbReference type="GO" id="GO:0005737">
    <property type="term" value="C:cytoplasm"/>
    <property type="evidence" value="ECO:0007005"/>
    <property type="project" value="PomBase"/>
</dbReference>
<dbReference type="GO" id="GO:0005881">
    <property type="term" value="C:cytoplasmic microtubule"/>
    <property type="evidence" value="ECO:0000314"/>
    <property type="project" value="PomBase"/>
</dbReference>
<dbReference type="GO" id="GO:0005829">
    <property type="term" value="C:cytosol"/>
    <property type="evidence" value="ECO:0007005"/>
    <property type="project" value="PomBase"/>
</dbReference>
<dbReference type="GO" id="GO:0000923">
    <property type="term" value="C:equatorial microtubule organizing center"/>
    <property type="evidence" value="ECO:0000314"/>
    <property type="project" value="PomBase"/>
</dbReference>
<dbReference type="GO" id="GO:0031021">
    <property type="term" value="C:interphase microtubule organizing center"/>
    <property type="evidence" value="ECO:0000314"/>
    <property type="project" value="PomBase"/>
</dbReference>
<dbReference type="GO" id="GO:0015630">
    <property type="term" value="C:microtubule cytoskeleton"/>
    <property type="evidence" value="ECO:0000314"/>
    <property type="project" value="PomBase"/>
</dbReference>
<dbReference type="GO" id="GO:0044732">
    <property type="term" value="C:mitotic spindle pole body"/>
    <property type="evidence" value="ECO:0000314"/>
    <property type="project" value="PomBase"/>
</dbReference>
<dbReference type="GO" id="GO:0099070">
    <property type="term" value="C:static microtubule bundle"/>
    <property type="evidence" value="ECO:0000314"/>
    <property type="project" value="PomBase"/>
</dbReference>
<dbReference type="GO" id="GO:0031024">
    <property type="term" value="P:interphase microtubule organizing center assembly"/>
    <property type="evidence" value="ECO:0000315"/>
    <property type="project" value="PomBase"/>
</dbReference>
<dbReference type="GO" id="GO:0001578">
    <property type="term" value="P:microtubule bundle formation"/>
    <property type="evidence" value="ECO:0000315"/>
    <property type="project" value="PomBase"/>
</dbReference>
<dbReference type="GO" id="GO:0000281">
    <property type="term" value="P:mitotic cytokinesis"/>
    <property type="evidence" value="ECO:0000315"/>
    <property type="project" value="PomBase"/>
</dbReference>
<dbReference type="GO" id="GO:0007097">
    <property type="term" value="P:nuclear migration"/>
    <property type="evidence" value="ECO:0000315"/>
    <property type="project" value="PomBase"/>
</dbReference>